<proteinExistence type="inferred from homology"/>
<name>RECR_BURPS</name>
<evidence type="ECO:0000255" key="1">
    <source>
        <dbReference type="HAMAP-Rule" id="MF_00017"/>
    </source>
</evidence>
<evidence type="ECO:0000305" key="2"/>
<reference key="1">
    <citation type="journal article" date="2004" name="Proc. Natl. Acad. Sci. U.S.A.">
        <title>Genomic plasticity of the causative agent of melioidosis, Burkholderia pseudomallei.</title>
        <authorList>
            <person name="Holden M.T.G."/>
            <person name="Titball R.W."/>
            <person name="Peacock S.J."/>
            <person name="Cerdeno-Tarraga A.-M."/>
            <person name="Atkins T."/>
            <person name="Crossman L.C."/>
            <person name="Pitt T."/>
            <person name="Churcher C."/>
            <person name="Mungall K.L."/>
            <person name="Bentley S.D."/>
            <person name="Sebaihia M."/>
            <person name="Thomson N.R."/>
            <person name="Bason N."/>
            <person name="Beacham I.R."/>
            <person name="Brooks K."/>
            <person name="Brown K.A."/>
            <person name="Brown N.F."/>
            <person name="Challis G.L."/>
            <person name="Cherevach I."/>
            <person name="Chillingworth T."/>
            <person name="Cronin A."/>
            <person name="Crossett B."/>
            <person name="Davis P."/>
            <person name="DeShazer D."/>
            <person name="Feltwell T."/>
            <person name="Fraser A."/>
            <person name="Hance Z."/>
            <person name="Hauser H."/>
            <person name="Holroyd S."/>
            <person name="Jagels K."/>
            <person name="Keith K.E."/>
            <person name="Maddison M."/>
            <person name="Moule S."/>
            <person name="Price C."/>
            <person name="Quail M.A."/>
            <person name="Rabbinowitsch E."/>
            <person name="Rutherford K."/>
            <person name="Sanders M."/>
            <person name="Simmonds M."/>
            <person name="Songsivilai S."/>
            <person name="Stevens K."/>
            <person name="Tumapa S."/>
            <person name="Vesaratchavest M."/>
            <person name="Whitehead S."/>
            <person name="Yeats C."/>
            <person name="Barrell B.G."/>
            <person name="Oyston P.C.F."/>
            <person name="Parkhill J."/>
        </authorList>
    </citation>
    <scope>NUCLEOTIDE SEQUENCE [LARGE SCALE GENOMIC DNA]</scope>
    <source>
        <strain>K96243</strain>
    </source>
</reference>
<gene>
    <name evidence="1" type="primary">recR</name>
    <name type="ordered locus">BPSL1500</name>
</gene>
<accession>Q63UU6</accession>
<sequence length="200" mass="22042">MSIKPPSALSELVEALRALPGVGPKSAQRIAYHLMQHDREGAERLGRSLLFATEHLRHCEKCNTFTEAQVCEVCSDPERDPALLCVVETPADQIMLEQTMTYRGLYFVLMGRLSPLDGIGPKEIHFDRLVRRASDGIVKEVVLATNFTNEGEATAHYLGQTLKARGLAVTRLARGVPVGGELEYVDAGTIARAMLDRRTL</sequence>
<organism>
    <name type="scientific">Burkholderia pseudomallei (strain K96243)</name>
    <dbReference type="NCBI Taxonomy" id="272560"/>
    <lineage>
        <taxon>Bacteria</taxon>
        <taxon>Pseudomonadati</taxon>
        <taxon>Pseudomonadota</taxon>
        <taxon>Betaproteobacteria</taxon>
        <taxon>Burkholderiales</taxon>
        <taxon>Burkholderiaceae</taxon>
        <taxon>Burkholderia</taxon>
        <taxon>pseudomallei group</taxon>
    </lineage>
</organism>
<keyword id="KW-0227">DNA damage</keyword>
<keyword id="KW-0233">DNA recombination</keyword>
<keyword id="KW-0234">DNA repair</keyword>
<keyword id="KW-0479">Metal-binding</keyword>
<keyword id="KW-1185">Reference proteome</keyword>
<keyword id="KW-0862">Zinc</keyword>
<keyword id="KW-0863">Zinc-finger</keyword>
<protein>
    <recommendedName>
        <fullName evidence="1">Recombination protein RecR</fullName>
    </recommendedName>
</protein>
<dbReference type="EMBL" id="BX571965">
    <property type="protein sequence ID" value="CAH35501.1"/>
    <property type="status" value="ALT_INIT"/>
    <property type="molecule type" value="Genomic_DNA"/>
</dbReference>
<dbReference type="RefSeq" id="WP_004521324.1">
    <property type="nucleotide sequence ID" value="NZ_CP009538.1"/>
</dbReference>
<dbReference type="RefSeq" id="YP_108120.1">
    <property type="nucleotide sequence ID" value="NC_006350.1"/>
</dbReference>
<dbReference type="SMR" id="Q63UU6"/>
<dbReference type="STRING" id="272560.BPSL1500"/>
<dbReference type="KEGG" id="bps:BPSL1500"/>
<dbReference type="PATRIC" id="fig|272560.51.peg.3536"/>
<dbReference type="eggNOG" id="COG0353">
    <property type="taxonomic scope" value="Bacteria"/>
</dbReference>
<dbReference type="Proteomes" id="UP000000605">
    <property type="component" value="Chromosome 1"/>
</dbReference>
<dbReference type="GO" id="GO:0003677">
    <property type="term" value="F:DNA binding"/>
    <property type="evidence" value="ECO:0007669"/>
    <property type="project" value="UniProtKB-UniRule"/>
</dbReference>
<dbReference type="GO" id="GO:0008270">
    <property type="term" value="F:zinc ion binding"/>
    <property type="evidence" value="ECO:0007669"/>
    <property type="project" value="UniProtKB-KW"/>
</dbReference>
<dbReference type="GO" id="GO:0006310">
    <property type="term" value="P:DNA recombination"/>
    <property type="evidence" value="ECO:0007669"/>
    <property type="project" value="UniProtKB-UniRule"/>
</dbReference>
<dbReference type="GO" id="GO:0006281">
    <property type="term" value="P:DNA repair"/>
    <property type="evidence" value="ECO:0007669"/>
    <property type="project" value="UniProtKB-UniRule"/>
</dbReference>
<dbReference type="CDD" id="cd01025">
    <property type="entry name" value="TOPRIM_recR"/>
    <property type="match status" value="1"/>
</dbReference>
<dbReference type="Gene3D" id="3.30.60.80">
    <property type="match status" value="1"/>
</dbReference>
<dbReference type="Gene3D" id="3.40.1360.10">
    <property type="match status" value="1"/>
</dbReference>
<dbReference type="Gene3D" id="6.10.250.240">
    <property type="match status" value="1"/>
</dbReference>
<dbReference type="Gene3D" id="1.10.8.420">
    <property type="entry name" value="RecR Domain 1"/>
    <property type="match status" value="1"/>
</dbReference>
<dbReference type="HAMAP" id="MF_00017">
    <property type="entry name" value="RecR"/>
    <property type="match status" value="1"/>
</dbReference>
<dbReference type="InterPro" id="IPR000093">
    <property type="entry name" value="DNA_Rcmb_RecR"/>
</dbReference>
<dbReference type="InterPro" id="IPR023627">
    <property type="entry name" value="Rcmb_RecR"/>
</dbReference>
<dbReference type="InterPro" id="IPR015967">
    <property type="entry name" value="Rcmb_RecR_Znf"/>
</dbReference>
<dbReference type="InterPro" id="IPR006171">
    <property type="entry name" value="TOPRIM_dom"/>
</dbReference>
<dbReference type="InterPro" id="IPR034137">
    <property type="entry name" value="TOPRIM_RecR"/>
</dbReference>
<dbReference type="NCBIfam" id="TIGR00615">
    <property type="entry name" value="recR"/>
    <property type="match status" value="1"/>
</dbReference>
<dbReference type="PANTHER" id="PTHR30446">
    <property type="entry name" value="RECOMBINATION PROTEIN RECR"/>
    <property type="match status" value="1"/>
</dbReference>
<dbReference type="PANTHER" id="PTHR30446:SF0">
    <property type="entry name" value="RECOMBINATION PROTEIN RECR"/>
    <property type="match status" value="1"/>
</dbReference>
<dbReference type="Pfam" id="PF21175">
    <property type="entry name" value="RecR_C"/>
    <property type="match status" value="1"/>
</dbReference>
<dbReference type="Pfam" id="PF21176">
    <property type="entry name" value="RecR_HhH"/>
    <property type="match status" value="1"/>
</dbReference>
<dbReference type="Pfam" id="PF02132">
    <property type="entry name" value="RecR_ZnF"/>
    <property type="match status" value="1"/>
</dbReference>
<dbReference type="Pfam" id="PF13662">
    <property type="entry name" value="Toprim_4"/>
    <property type="match status" value="1"/>
</dbReference>
<dbReference type="SMART" id="SM00493">
    <property type="entry name" value="TOPRIM"/>
    <property type="match status" value="1"/>
</dbReference>
<dbReference type="SUPFAM" id="SSF111304">
    <property type="entry name" value="Recombination protein RecR"/>
    <property type="match status" value="1"/>
</dbReference>
<dbReference type="PROSITE" id="PS01300">
    <property type="entry name" value="RECR"/>
    <property type="match status" value="1"/>
</dbReference>
<dbReference type="PROSITE" id="PS50880">
    <property type="entry name" value="TOPRIM"/>
    <property type="match status" value="1"/>
</dbReference>
<comment type="function">
    <text evidence="1">May play a role in DNA repair. It seems to be involved in an RecBC-independent recombinational process of DNA repair. It may act with RecF and RecO.</text>
</comment>
<comment type="similarity">
    <text evidence="1">Belongs to the RecR family.</text>
</comment>
<comment type="sequence caution" evidence="2">
    <conflict type="erroneous initiation">
        <sequence resource="EMBL-CDS" id="CAH35501"/>
    </conflict>
</comment>
<feature type="chain" id="PRO_0000190297" description="Recombination protein RecR">
    <location>
        <begin position="1"/>
        <end position="200"/>
    </location>
</feature>
<feature type="domain" description="Toprim" evidence="1">
    <location>
        <begin position="82"/>
        <end position="177"/>
    </location>
</feature>
<feature type="zinc finger region" description="C4-type" evidence="1">
    <location>
        <begin position="59"/>
        <end position="74"/>
    </location>
</feature>